<accession>Q9CMP0</accession>
<accession>Q6PKM8</accession>
<accession>Q9AHL6</accession>
<accession>Q9KJ99</accession>
<name>CHS_PASMU</name>
<sequence>MNTLSQAIKAYNSNDYELALKLFEKSAETYGRKIVEFQIIKCKEKLSTNSYVSEDKKNSVCDSSLDIATQLLLSNVKKLTLSESEKNSLKNKWKSITGKKSENAEIRKVELVPKDFPKDLVLAPLPDHVNDFTWYKNRKKSLGIKPVNKNIGLSIIIPTFNRSRILDITLACLVNQKTNYPFEVVVADDGSKENLLTIVQKYEQKLDIKYVRQKDYGYQLCAVRNLGLRTAKYDFVSILDCDMAPQQLWVHSYLTELLEDNDIVLIGPRKYVDTHNITAEQFLNDPYLIESLPETATNNNPSITSKGNISLDWRLEHFKKTDNLRLCDSPFRYFSCGNVAFSKEWLNKVGWFDEEFNHWGGEDVEFGYRLFAKGCFFRVIDGGMAYHQEPPGKENETDREAGKSITLKIVKEKVPYIYRKLLPIEDSHIHRIPLVSIYIPAYNCANYIQRCVDSALNQTVVDLEVCICNDGSTDNTLEVINKLYGNNPRVRIMSKPNGGIASASNAAVSFAKGYYIGQLDSDDYLEPDAVELCLKEFLKDKTLACVYTTNRNVNPDGSLIANGYNWPEFSREKLTTAMIAHHFRMFTIRAWHLTDGFNEKIENAVDYDMFLKLSEVGKFKHLNKICYNRVLHGDNTSIKNLDTQKKNHFVVVNQSLNRQRVSNYNYDEFDNLDESRKYIFNKTADYQEEIDILKDIKIVQRKDAKVAISIFYPNRLDGLVKKLNNIIEYNKNVLIIVLHIDKNHLTSDIKKEILEFHNKNQINILLNNDVSYYTNNRLIKTKAHLSNMNKLRQLNLNLEYIIFDNHDSLFIKNDSYNHIKKYDIGMNFSSLTNDWINKINAHSPFKNLIKKYFNDNDLKTINMKGASQGMFIKYTLAHDIATIMKEVITLCQSTDSVPEYNTEDIWFQFALLILEKKTGHVFNKTSTLTYMPWERKLQWTNEQIESAKRGENIPVNKFIINSITL</sequence>
<proteinExistence type="inferred from homology"/>
<feature type="chain" id="PRO_0000059258" description="Chondroitin synthase">
    <location>
        <begin position="1"/>
        <end position="965"/>
    </location>
</feature>
<feature type="region of interest" description="Galactosaminyltransferase; A1 domain" evidence="2">
    <location>
        <begin position="132"/>
        <end position="418"/>
    </location>
</feature>
<feature type="region of interest" description="Glucuronosyltransferase; A2 domain" evidence="2">
    <location>
        <begin position="419"/>
        <end position="683"/>
    </location>
</feature>
<feature type="binding site" evidence="2">
    <location>
        <position position="158"/>
    </location>
    <ligand>
        <name>UDP-N-acetyl-alpha-D-galactosamine</name>
        <dbReference type="ChEBI" id="CHEBI:67138"/>
    </ligand>
</feature>
<feature type="binding site" evidence="2">
    <location>
        <position position="162"/>
    </location>
    <ligand>
        <name>UDP-N-acetyl-alpha-D-galactosamine</name>
        <dbReference type="ChEBI" id="CHEBI:67138"/>
    </ligand>
</feature>
<feature type="binding site" evidence="2">
    <location>
        <position position="189"/>
    </location>
    <ligand>
        <name>UDP-N-acetyl-alpha-D-galactosamine</name>
        <dbReference type="ChEBI" id="CHEBI:67138"/>
    </ligand>
</feature>
<feature type="binding site" evidence="2">
    <location>
        <position position="218"/>
    </location>
    <ligand>
        <name>UDP-N-acetyl-alpha-D-galactosamine</name>
        <dbReference type="ChEBI" id="CHEBI:67138"/>
    </ligand>
</feature>
<feature type="binding site" evidence="2">
    <location>
        <position position="224"/>
    </location>
    <ligand>
        <name>UDP-N-acetyl-alpha-D-galactosamine</name>
        <dbReference type="ChEBI" id="CHEBI:67138"/>
    </ligand>
</feature>
<feature type="binding site" evidence="2">
    <location>
        <begin position="240"/>
        <end position="241"/>
    </location>
    <ligand>
        <name>UDP-N-acetyl-alpha-D-galactosamine</name>
        <dbReference type="ChEBI" id="CHEBI:67138"/>
    </ligand>
</feature>
<feature type="binding site" evidence="2">
    <location>
        <position position="242"/>
    </location>
    <ligand>
        <name>Mn(2+)</name>
        <dbReference type="ChEBI" id="CHEBI:29035"/>
        <label>1</label>
    </ligand>
</feature>
<feature type="binding site" evidence="2">
    <location>
        <begin position="362"/>
        <end position="363"/>
    </location>
    <ligand>
        <name>UDP-N-acetyl-alpha-D-galactosamine</name>
        <dbReference type="ChEBI" id="CHEBI:67138"/>
    </ligand>
</feature>
<feature type="binding site" evidence="2">
    <location>
        <position position="387"/>
    </location>
    <ligand>
        <name>Mn(2+)</name>
        <dbReference type="ChEBI" id="CHEBI:29035"/>
        <label>1</label>
    </ligand>
</feature>
<feature type="binding site" evidence="2">
    <location>
        <position position="442"/>
    </location>
    <ligand>
        <name>UDP-alpha-D-glucuronate</name>
        <dbReference type="ChEBI" id="CHEBI:58052"/>
    </ligand>
</feature>
<feature type="binding site" evidence="2">
    <location>
        <position position="470"/>
    </location>
    <ligand>
        <name>UDP-alpha-D-glucuronate</name>
        <dbReference type="ChEBI" id="CHEBI:58052"/>
    </ligand>
</feature>
<feature type="binding site" evidence="2">
    <location>
        <begin position="518"/>
        <end position="521"/>
    </location>
    <ligand>
        <name>UDP-alpha-D-glucuronate</name>
        <dbReference type="ChEBI" id="CHEBI:58052"/>
    </ligand>
</feature>
<feature type="binding site" evidence="2">
    <location>
        <position position="522"/>
    </location>
    <ligand>
        <name>Mn(2+)</name>
        <dbReference type="ChEBI" id="CHEBI:29035"/>
        <label>2</label>
    </ligand>
</feature>
<feature type="binding site" evidence="2">
    <location>
        <position position="582"/>
    </location>
    <ligand>
        <name>UDP-alpha-D-glucuronate</name>
        <dbReference type="ChEBI" id="CHEBI:58052"/>
    </ligand>
</feature>
<feature type="binding site" evidence="2">
    <location>
        <begin position="604"/>
        <end position="605"/>
    </location>
    <ligand>
        <name>UDP-alpha-D-glucuronate</name>
        <dbReference type="ChEBI" id="CHEBI:58052"/>
    </ligand>
</feature>
<feature type="binding site" evidence="2">
    <location>
        <position position="632"/>
    </location>
    <ligand>
        <name>Mn(2+)</name>
        <dbReference type="ChEBI" id="CHEBI:29035"/>
        <label>2</label>
    </ligand>
</feature>
<feature type="sequence conflict" description="In Ref. 3; AAK17921." evidence="3" ref="3">
    <original>I</original>
    <variation>T</variation>
    <location>
        <position position="157"/>
    </location>
</feature>
<feature type="sequence conflict" description="In Ref. 3; AAK17921." evidence="3" ref="3">
    <original>L</original>
    <variation>S</variation>
    <location>
        <position position="170"/>
    </location>
</feature>
<feature type="sequence conflict" description="In Ref. 1; AAF97500." evidence="3" ref="1">
    <original>K</original>
    <variation>N</variation>
    <location>
        <position position="600"/>
    </location>
</feature>
<feature type="sequence conflict" description="In Ref. 1; AAF97500." evidence="3" ref="1">
    <original>NLDT</original>
    <variation>KLGI</variation>
    <location>
        <begin position="640"/>
        <end position="643"/>
    </location>
</feature>
<feature type="sequence conflict" description="In Ref. 1; AAF97500." evidence="3" ref="1">
    <original>RVSN</original>
    <variation>GINY</variation>
    <location>
        <begin position="660"/>
        <end position="663"/>
    </location>
</feature>
<feature type="sequence conflict" description="In Ref. 1; AAF97500." evidence="3" ref="1">
    <original>E</original>
    <variation>K</variation>
    <location>
        <position position="668"/>
    </location>
</feature>
<feature type="sequence conflict" description="In Ref. 1; AAF97500." evidence="3" ref="1">
    <original>N</original>
    <variation>D</variation>
    <location>
        <position position="671"/>
    </location>
</feature>
<feature type="sequence conflict" description="In Ref. 1; AAF97500." evidence="3" ref="1">
    <original>D</original>
    <variation>E</variation>
    <location>
        <position position="685"/>
    </location>
</feature>
<feature type="sequence conflict" description="In Ref. 1; AAF97500." evidence="3" ref="1">
    <original>I</original>
    <variation>M</variation>
    <location>
        <position position="690"/>
    </location>
</feature>
<feature type="sequence conflict" description="In Ref. 1; AAF97500." evidence="3" ref="1">
    <original>IKIVQR</original>
    <variation>LKLIQN</variation>
    <location>
        <begin position="696"/>
        <end position="701"/>
    </location>
</feature>
<feature type="sequence conflict" description="In Ref. 1; AAF97500." evidence="3" ref="1">
    <original>VAI</original>
    <variation>IAV</variation>
    <location>
        <begin position="706"/>
        <end position="708"/>
    </location>
</feature>
<feature type="sequence conflict" description="In Ref. 1; AAF97500." evidence="3" ref="1">
    <original>RLD</original>
    <variation>TLN</variation>
    <location>
        <begin position="715"/>
        <end position="717"/>
    </location>
</feature>
<feature type="sequence conflict" description="In Ref. 1; AAF97500." evidence="3" ref="1">
    <original>VLIIVLHI</original>
    <variation>IFVIILHV</variation>
    <location>
        <begin position="733"/>
        <end position="740"/>
    </location>
</feature>
<feature type="sequence conflict" description="In Ref. 1; AAF97500." evidence="3" ref="1">
    <original>S</original>
    <variation>P</variation>
    <location>
        <position position="747"/>
    </location>
</feature>
<feature type="sequence conflict" description="In Ref. 1; AAF97500." evidence="3" ref="1">
    <original>EFHNKNQI</original>
    <variation>AFYHKHQV</variation>
    <location>
        <begin position="755"/>
        <end position="762"/>
    </location>
</feature>
<feature type="sequence conflict" description="In Ref. 1; AAF97500." evidence="3" ref="1">
    <original>V</original>
    <variation>I</variation>
    <location>
        <position position="770"/>
    </location>
</feature>
<feature type="sequence conflict" description="In Ref. 1; AAF97500." evidence="3" ref="1">
    <original>N</original>
    <variation>S</variation>
    <location>
        <position position="775"/>
    </location>
</feature>
<feature type="sequence conflict" description="In Ref. 1; AAF97500." evidence="3" ref="1">
    <original>K</original>
    <variation>E</variation>
    <location>
        <position position="782"/>
    </location>
</feature>
<feature type="sequence conflict" description="In Ref. 1; AAF97500." evidence="3" ref="1">
    <original>M</original>
    <variation>I</variation>
    <location>
        <position position="788"/>
    </location>
</feature>
<feature type="sequence conflict" description="In Ref. 1; AAF97500." evidence="3" ref="1">
    <original>R</original>
    <variation>S</variation>
    <location>
        <position position="792"/>
    </location>
</feature>
<feature type="sequence conflict" description="In Ref. 1; AAF97500." evidence="3" ref="1">
    <original>L</original>
    <variation>C</variation>
    <location>
        <position position="798"/>
    </location>
</feature>
<feature type="sequence conflict" description="In Ref. 1; AAF97500." evidence="3" ref="1">
    <original>I</original>
    <variation>V</variation>
    <location>
        <position position="811"/>
    </location>
</feature>
<feature type="sequence conflict" description="In Ref. 1; AAF97500." evidence="3" ref="1">
    <original>NHI</original>
    <variation>AYM</variation>
    <location>
        <begin position="817"/>
        <end position="819"/>
    </location>
</feature>
<feature type="sequence conflict" description="In Ref. 1; AAF97500." evidence="3" ref="1">
    <original>I</original>
    <variation>V</variation>
    <location>
        <position position="824"/>
    </location>
</feature>
<feature type="sequence conflict" description="In Ref. 1; AAF97500." evidence="3" ref="1">
    <original>S</original>
    <variation>A</variation>
    <location>
        <position position="830"/>
    </location>
</feature>
<feature type="sequence conflict" description="In Ref. 1; AAF97500." evidence="3" ref="1">
    <original>N</original>
    <variation>H</variation>
    <location>
        <position position="833"/>
    </location>
</feature>
<feature type="sequence conflict" description="In Ref. 1; AAF97500." evidence="3" ref="1">
    <original>N</original>
    <variation>E</variation>
    <location>
        <position position="837"/>
    </location>
</feature>
<feature type="sequence conflict" description="In Ref. 1; AAF97500." evidence="3" ref="1">
    <original>S</original>
    <variation>P</variation>
    <location>
        <position position="843"/>
    </location>
</feature>
<feature type="sequence conflict" description="In Ref. 1; AAF97500." evidence="3" ref="1">
    <original>N</original>
    <variation>K</variation>
    <location>
        <position position="847"/>
    </location>
</feature>
<feature type="sequence conflict" description="In Ref. 1; AAF97500." evidence="3" ref="1">
    <original>K</original>
    <variation>T</variation>
    <location>
        <position position="851"/>
    </location>
</feature>
<feature type="sequence conflict" description="In Ref. 1; AAF97500." evidence="3" ref="1">
    <original>KTINM</original>
    <variation>RSMNV</variation>
    <location>
        <begin position="859"/>
        <end position="863"/>
    </location>
</feature>
<feature type="sequence conflict" description="In Ref. 1; AAF97500." evidence="3" ref="1">
    <original>I</original>
    <variation>M</variation>
    <location>
        <position position="872"/>
    </location>
</feature>
<feature type="sequence conflict" description="In Ref. 1; AAF97500." evidence="3" ref="1">
    <original>TLAHDIATIM</original>
    <variation>ALPHELLTII</variation>
    <location>
        <begin position="875"/>
        <end position="884"/>
    </location>
</feature>
<feature type="sequence conflict" description="In Ref. 1; AAF97500." evidence="3" ref="1">
    <original>L</original>
    <variation>S</variation>
    <location>
        <position position="890"/>
    </location>
</feature>
<feature type="sequence conflict" description="In Ref. 1; AAF97500." evidence="3" ref="1">
    <original>T</original>
    <variation>I</variation>
    <location>
        <position position="894"/>
    </location>
</feature>
<feature type="sequence conflict" description="In Ref. 4; AAT10183." evidence="3" ref="4">
    <original>A</original>
    <variation>V</variation>
    <location>
        <position position="910"/>
    </location>
</feature>
<feature type="sequence conflict" description="In Ref. 1; AAF97500." evidence="3" ref="1">
    <original>E</original>
    <variation>Q</variation>
    <location>
        <position position="945"/>
    </location>
</feature>
<feature type="sequence conflict" description="In Ref. 1; AAF97500." evidence="3" ref="1">
    <original>R</original>
    <variation>K</variation>
    <location>
        <position position="949"/>
    </location>
</feature>
<gene>
    <name type="primary">fcbD</name>
    <name type="ordered locus">PM0775</name>
</gene>
<organism>
    <name type="scientific">Pasteurella multocida (strain Pm70)</name>
    <dbReference type="NCBI Taxonomy" id="272843"/>
    <lineage>
        <taxon>Bacteria</taxon>
        <taxon>Pseudomonadati</taxon>
        <taxon>Pseudomonadota</taxon>
        <taxon>Gammaproteobacteria</taxon>
        <taxon>Pasteurellales</taxon>
        <taxon>Pasteurellaceae</taxon>
        <taxon>Pasteurella</taxon>
    </lineage>
</organism>
<evidence type="ECO:0000250" key="1"/>
<evidence type="ECO:0000250" key="2">
    <source>
        <dbReference type="UniProtKB" id="Q8L0V4"/>
    </source>
</evidence>
<evidence type="ECO:0000305" key="3"/>
<protein>
    <recommendedName>
        <fullName>Chondroitin synthase</fullName>
        <shortName>CS</shortName>
    </recommendedName>
    <domain>
        <recommendedName>
            <fullName>Glucuronosyl-N-acetylgalactosaminyl-proteoglycan 4-beta-N-acetylgalactosaminyltransferase</fullName>
            <ecNumber evidence="2">2.4.1.175</ecNumber>
        </recommendedName>
        <alternativeName>
            <fullName>UDP-GalNAc transferase</fullName>
        </alternativeName>
    </domain>
    <domain>
        <recommendedName>
            <fullName>N-acetylgalactosaminyl-proteoglycan 3-beta-glucuronosyltransferase</fullName>
            <ecNumber evidence="2">2.4.1.226</ecNumber>
        </recommendedName>
        <alternativeName>
            <fullName>UDP-GlcUA transferase</fullName>
        </alternativeName>
    </domain>
</protein>
<dbReference type="EC" id="2.4.1.175" evidence="2"/>
<dbReference type="EC" id="2.4.1.226" evidence="2"/>
<dbReference type="EMBL" id="AF195517">
    <property type="protein sequence ID" value="AAF97500.2"/>
    <property type="molecule type" value="Genomic_DNA"/>
</dbReference>
<dbReference type="EMBL" id="AF302467">
    <property type="protein sequence ID" value="AAK17921.1"/>
    <property type="molecule type" value="Genomic_DNA"/>
</dbReference>
<dbReference type="EMBL" id="AY604234">
    <property type="protein sequence ID" value="AAT10183.1"/>
    <property type="molecule type" value="Genomic_DNA"/>
</dbReference>
<dbReference type="EMBL" id="AE004439">
    <property type="protein sequence ID" value="AAK02859.1"/>
    <property type="molecule type" value="Genomic_DNA"/>
</dbReference>
<dbReference type="RefSeq" id="WP_010906847.1">
    <property type="nucleotide sequence ID" value="NC_002663.1"/>
</dbReference>
<dbReference type="SMR" id="Q9CMP0"/>
<dbReference type="STRING" id="272843.PM0775"/>
<dbReference type="CAZy" id="GT2">
    <property type="family name" value="Glycosyltransferase Family 2"/>
</dbReference>
<dbReference type="EnsemblBacteria" id="AAK02859">
    <property type="protein sequence ID" value="AAK02859"/>
    <property type="gene ID" value="PM0775"/>
</dbReference>
<dbReference type="KEGG" id="pmu:PM0775"/>
<dbReference type="PATRIC" id="fig|272843.6.peg.784"/>
<dbReference type="HOGENOM" id="CLU_013018_0_0_6"/>
<dbReference type="OrthoDB" id="276604at2"/>
<dbReference type="BRENDA" id="2.4.1.175">
    <property type="organism ID" value="4558"/>
</dbReference>
<dbReference type="Proteomes" id="UP000000809">
    <property type="component" value="Chromosome"/>
</dbReference>
<dbReference type="GO" id="GO:0005886">
    <property type="term" value="C:plasma membrane"/>
    <property type="evidence" value="ECO:0007669"/>
    <property type="project" value="UniProtKB-SubCell"/>
</dbReference>
<dbReference type="GO" id="GO:0047238">
    <property type="term" value="F:glucuronosyl-N-acetylgalactosaminyl-proteoglycan 4-beta-N-acetylgalactosaminyltransferase activity"/>
    <property type="evidence" value="ECO:0007669"/>
    <property type="project" value="UniProtKB-EC"/>
</dbReference>
<dbReference type="GO" id="GO:0046872">
    <property type="term" value="F:metal ion binding"/>
    <property type="evidence" value="ECO:0007669"/>
    <property type="project" value="UniProtKB-KW"/>
</dbReference>
<dbReference type="GO" id="GO:0050510">
    <property type="term" value="F:N-acetylgalactosaminyl-proteoglycan 3-beta-glucuronosyltransferase activity"/>
    <property type="evidence" value="ECO:0007669"/>
    <property type="project" value="UniProtKB-EC"/>
</dbReference>
<dbReference type="Gene3D" id="3.90.550.10">
    <property type="entry name" value="Spore Coat Polysaccharide Biosynthesis Protein SpsA, Chain A"/>
    <property type="match status" value="2"/>
</dbReference>
<dbReference type="InterPro" id="IPR027791">
    <property type="entry name" value="Galactosyl_T_C"/>
</dbReference>
<dbReference type="InterPro" id="IPR001173">
    <property type="entry name" value="Glyco_trans_2-like"/>
</dbReference>
<dbReference type="InterPro" id="IPR050834">
    <property type="entry name" value="Glycosyltransf_2"/>
</dbReference>
<dbReference type="InterPro" id="IPR029044">
    <property type="entry name" value="Nucleotide-diphossugar_trans"/>
</dbReference>
<dbReference type="PANTHER" id="PTHR43685">
    <property type="entry name" value="GLYCOSYLTRANSFERASE"/>
    <property type="match status" value="1"/>
</dbReference>
<dbReference type="PANTHER" id="PTHR43685:SF3">
    <property type="entry name" value="SLR2126 PROTEIN"/>
    <property type="match status" value="1"/>
</dbReference>
<dbReference type="Pfam" id="PF02709">
    <property type="entry name" value="Glyco_transf_7C"/>
    <property type="match status" value="1"/>
</dbReference>
<dbReference type="Pfam" id="PF00535">
    <property type="entry name" value="Glycos_transf_2"/>
    <property type="match status" value="2"/>
</dbReference>
<dbReference type="SUPFAM" id="SSF53448">
    <property type="entry name" value="Nucleotide-diphospho-sugar transferases"/>
    <property type="match status" value="2"/>
</dbReference>
<comment type="function">
    <text evidence="2">Glycosyltransferase that catalyzes elongation of chondroitin, a polysaccharide composed of a repeating disaccharide of N-acetylgalactosamine (GalNAc) and glucuronic acid (GlcUA) units, by alternatively transferring the GlcUA and GalNAc moiety from UDP-GlcUA and UDP-GalNAc to the non-reducing ends of the chondroitin chain. Each chondroitin unit has the composition beta-(1-&gt;4)-GlcUA-beta-(1-&gt;3)-GalNAc.</text>
</comment>
<comment type="catalytic activity">
    <reaction evidence="2">
        <text>3-O-(beta-D-GlcA-(1-&gt;3)-beta-D-GalNAc-(1-&gt;4)-beta-D-GlcA-(1-&gt;3)-beta-D-Gal-(1-&gt;3)-beta-D-Gal-(1-&gt;4)-beta-D-Xyl)-L-seryl-[protein] + UDP-N-acetyl-alpha-D-galactosamine = 3-O-(beta-D-GalNAc-(1-&gt;4)-beta-D-GlcA-(1-&gt;3)-beta-D-GalNAc-(1-&gt;4)-beta-D-GlcA-(1-&gt;3)-beta-D-Gal-(1-&gt;3)-beta-D-Gal-(1-&gt;4)-beta-D-Xyl)-L-seryl-[protein] + UDP + H(+)</text>
        <dbReference type="Rhea" id="RHEA:20800"/>
        <dbReference type="Rhea" id="RHEA-COMP:14058"/>
        <dbReference type="Rhea" id="RHEA-COMP:14059"/>
        <dbReference type="ChEBI" id="CHEBI:15378"/>
        <dbReference type="ChEBI" id="CHEBI:58223"/>
        <dbReference type="ChEBI" id="CHEBI:67138"/>
        <dbReference type="ChEBI" id="CHEBI:138442"/>
        <dbReference type="ChEBI" id="CHEBI:138443"/>
        <dbReference type="EC" id="2.4.1.175"/>
    </reaction>
</comment>
<comment type="catalytic activity">
    <reaction evidence="2">
        <text>3-O-{beta-D-GlcA-(1-&gt;3)-[beta-D-GalNAc-(1-&gt;4)-beta-D-GlcA-(1-&gt;3)](n)-beta-D-GalNAc-(1-&gt;4)-beta-D-GlcA-(1-&gt;3)-beta-D-Gal-(1-&gt;3)-beta-D-Gal-(1-&gt;4)-beta-D-Xyl}-L-seryl-[protein] + UDP-N-acetyl-alpha-D-galactosamine = 3-O-{[beta-D-GalNAc-(1-&gt;4)-beta-D-GlcA-(1-&gt;3)](n+1)-beta-D-GalNAc-(1-&gt;4)-beta-D-GlcA-(1-&gt;3)-beta-D-Gal-(1-&gt;3)-beta-D-Gal-(1-&gt;4)-beta-D-Xyl}-L-seryl-[protein] + UDP + H(+)</text>
        <dbReference type="Rhea" id="RHEA:55000"/>
        <dbReference type="Rhea" id="RHEA-COMP:14060"/>
        <dbReference type="Rhea" id="RHEA-COMP:14301"/>
        <dbReference type="ChEBI" id="CHEBI:15378"/>
        <dbReference type="ChEBI" id="CHEBI:58223"/>
        <dbReference type="ChEBI" id="CHEBI:67138"/>
        <dbReference type="ChEBI" id="CHEBI:138444"/>
        <dbReference type="ChEBI" id="CHEBI:138445"/>
        <dbReference type="EC" id="2.4.1.175"/>
    </reaction>
</comment>
<comment type="catalytic activity">
    <reaction evidence="2">
        <text>3-O-(beta-D-GalNAc-(1-&gt;4)-beta-D-GlcA-(1-&gt;3)-beta-D-Gal-(1-&gt;3)-beta-D-Gal-(1-&gt;4)-beta-D-Xyl)-L-seryl-[protein] + UDP-alpha-D-glucuronate = 3-O-(beta-D-GlcA-(1-&gt;3)-beta-D-GalNAc-(1-&gt;4)-beta-D-GlcA-(1-&gt;3)-beta-D-Gal-(1-&gt;3)-beta-D-Gal-(1-&gt;4)-beta-D-Xyl)-L-seryl-[protein] + UDP + H(+)</text>
        <dbReference type="Rhea" id="RHEA:23428"/>
        <dbReference type="Rhea" id="RHEA-COMP:12575"/>
        <dbReference type="Rhea" id="RHEA-COMP:14058"/>
        <dbReference type="ChEBI" id="CHEBI:15378"/>
        <dbReference type="ChEBI" id="CHEBI:58052"/>
        <dbReference type="ChEBI" id="CHEBI:58223"/>
        <dbReference type="ChEBI" id="CHEBI:132105"/>
        <dbReference type="ChEBI" id="CHEBI:138442"/>
        <dbReference type="EC" id="2.4.1.226"/>
    </reaction>
</comment>
<comment type="catalytic activity">
    <reaction evidence="2">
        <text>3-O-{[beta-D-GalNAc-(1-&gt;4)-beta-D-GlcA-(1-&gt;3)](n)-beta-D-GalNAc-(1-&gt;4)-beta-D-GlcA-(1-&gt;3)-beta-D-Gal-(1-&gt;3)-beta-D-Gal-(1-&gt;4)-beta-D-Xyl}-L-seryl-[protein] + UDP-alpha-D-glucuronate = 3-O-{beta-D-GlcA-(1-&gt;3)-[beta-D-GalNAc-(1-&gt;4)-beta-D-GlcA-(1-&gt;3)](n)-beta-D-GalNAc-(1-&gt;4)-beta-D-GlcA-(1-&gt;3)-beta-D-Gal-(1-&gt;3)-beta-D-Gal-(1-&gt;4)-beta-D-Xyl}-L-seryl-[protein] + UDP + H(+)</text>
        <dbReference type="Rhea" id="RHEA:54996"/>
        <dbReference type="Rhea" id="RHEA-COMP:14060"/>
        <dbReference type="Rhea" id="RHEA-COMP:14061"/>
        <dbReference type="ChEBI" id="CHEBI:15378"/>
        <dbReference type="ChEBI" id="CHEBI:58052"/>
        <dbReference type="ChEBI" id="CHEBI:58223"/>
        <dbReference type="ChEBI" id="CHEBI:138444"/>
        <dbReference type="ChEBI" id="CHEBI:138445"/>
        <dbReference type="EC" id="2.4.1.226"/>
    </reaction>
</comment>
<comment type="cofactor">
    <cofactor evidence="2">
        <name>Mn(2+)</name>
        <dbReference type="ChEBI" id="CHEBI:29035"/>
    </cofactor>
</comment>
<comment type="subcellular location">
    <subcellularLocation>
        <location evidence="1">Cell membrane</location>
        <topology evidence="1">Peripheral membrane protein</topology>
    </subcellularLocation>
</comment>
<comment type="similarity">
    <text evidence="3">Belongs to the glycosyltransferase 2 family. CS/HAS subfamily.</text>
</comment>
<keyword id="KW-1003">Cell membrane</keyword>
<keyword id="KW-0328">Glycosyltransferase</keyword>
<keyword id="KW-0464">Manganese</keyword>
<keyword id="KW-0472">Membrane</keyword>
<keyword id="KW-0479">Metal-binding</keyword>
<keyword id="KW-0511">Multifunctional enzyme</keyword>
<keyword id="KW-1185">Reference proteome</keyword>
<keyword id="KW-0677">Repeat</keyword>
<keyword id="KW-0808">Transferase</keyword>
<reference key="1">
    <citation type="journal article" date="2000" name="J. Biol. Chem.">
        <title>Identification and molecular cloning of a chondroitin synthase from Pasteurella multocida type F.</title>
        <authorList>
            <person name="DeAngelis P.L."/>
            <person name="Padgett-McCue A.J."/>
        </authorList>
    </citation>
    <scope>NUCLEOTIDE SEQUENCE [GENOMIC DNA]</scope>
    <source>
        <strain>Serogroup F / P4679</strain>
    </source>
</reference>
<reference key="2">
    <citation type="submission" date="2004-03" db="EMBL/GenBank/DDBJ databases">
        <authorList>
            <person name="DeAngelis P.L."/>
            <person name="Padgett-McCue A.J."/>
        </authorList>
    </citation>
    <scope>SEQUENCE REVISION TO 335-336; 386; 398 AND 692</scope>
</reference>
<reference key="3">
    <citation type="journal article" date="2001" name="J. Clin. Microbiol.">
        <title>Genetic organization of Pasteurella multocida cap loci and development of a multiplex capsular PCR typing system.</title>
        <authorList>
            <person name="Townsend K.M."/>
            <person name="Boyce J.D."/>
            <person name="Chung J.Y."/>
            <person name="Frost A.J."/>
            <person name="Adler B."/>
        </authorList>
    </citation>
    <scope>NUCLEOTIDE SEQUENCE [GENOMIC DNA]</scope>
    <source>
        <strain>Serogroup F / P4218</strain>
    </source>
</reference>
<reference key="4">
    <citation type="submission" date="2004-04" db="EMBL/GenBank/DDBJ databases">
        <title>The first detection of Pasteurella multocida serogroup F in rabbits: analysis of serogroup F specific fcbD gene.</title>
        <authorList>
            <person name="Jaglic Z."/>
            <person name="Bartos M."/>
        </authorList>
    </citation>
    <scope>NUCLEOTIDE SEQUENCE [GENOMIC DNA]</scope>
    <source>
        <strain>Serogroup F / J-4103</strain>
    </source>
</reference>
<reference key="5">
    <citation type="journal article" date="2001" name="Proc. Natl. Acad. Sci. U.S.A.">
        <title>Complete genomic sequence of Pasteurella multocida Pm70.</title>
        <authorList>
            <person name="May B.J."/>
            <person name="Zhang Q."/>
            <person name="Li L.L."/>
            <person name="Paustian M.L."/>
            <person name="Whittam T.S."/>
            <person name="Kapur V."/>
        </authorList>
    </citation>
    <scope>NUCLEOTIDE SEQUENCE [LARGE SCALE GENOMIC DNA]</scope>
    <source>
        <strain>Pm70</strain>
    </source>
</reference>